<sequence length="610" mass="67092">MTNFSESEISEFKASFNQFDENGDGQISALELQKILTKCGEKVTGVEVRDMIKEVDTDGNGSIDFKEFLQVMQKARQHSANASPAFASAVKKVGAVNTIGGYSGSTASGVQHSYSDEEKVAYIDWINNCLAKDVDLKSRLPIPEDGDKFFAACNDGLLLCKLINDAVPDTIDERVLNKKNLNAFRINENQVLCINSAKAIGCNVVNIGAGDLVEGRAHLIMGLTWQIIKIGLFARINLTNHPELYRLLHDGETIEDLLKLPVEEILLRWFNYHLAAAGSQRRVKNFSGDIKDSECYTILLKQIAPKDAGVETSALNISNLDQRAVKVLENADKLGCKKFLKPKDIVTGFQKLNLAFVANLFNTHPALEPVEDVVIIEETREEKTFRNWMNSLGVDPFVNNLYEGTYDGLILIQLFDKIYPGLVDHKKVNYPPYKAMGAEMKKIENCNYAIQLGKDCKYSLVGIDGKNVYDKNKTLTLSILWQLMRGHVISILTALSGSGKPIADADIVNWTNSKLSAAGKKQISGFKDSTISTGIPILDVIEAVRPGSVDPALVATSGSAEDNLLNAKLAVSTARKVGAVVFALPEDIVEVKPKMVLTLFASLWQVEMTK</sequence>
<dbReference type="EMBL" id="L36202">
    <property type="protein sequence ID" value="AAA75489.1"/>
    <property type="molecule type" value="mRNA"/>
</dbReference>
<dbReference type="EMBL" id="AAFI02000023">
    <property type="protein sequence ID" value="EAL68100.1"/>
    <property type="molecule type" value="Genomic_DNA"/>
</dbReference>
<dbReference type="RefSeq" id="XP_642085.1">
    <property type="nucleotide sequence ID" value="XM_636993.1"/>
</dbReference>
<dbReference type="SMR" id="P54680"/>
<dbReference type="BioGRID" id="1246301">
    <property type="interactions" value="1"/>
</dbReference>
<dbReference type="FunCoup" id="P54680">
    <property type="interactions" value="389"/>
</dbReference>
<dbReference type="STRING" id="44689.P54680"/>
<dbReference type="PaxDb" id="44689-DDB0214994"/>
<dbReference type="EnsemblProtists" id="EAL68100">
    <property type="protein sequence ID" value="EAL68100"/>
    <property type="gene ID" value="DDB_G0277855"/>
</dbReference>
<dbReference type="GeneID" id="8621298"/>
<dbReference type="KEGG" id="ddi:DDB_G0277855"/>
<dbReference type="dictyBase" id="DDB_G0277855">
    <property type="gene designation" value="fimA"/>
</dbReference>
<dbReference type="VEuPathDB" id="AmoebaDB:DDB_G0277855"/>
<dbReference type="eggNOG" id="KOG0046">
    <property type="taxonomic scope" value="Eukaryota"/>
</dbReference>
<dbReference type="HOGENOM" id="CLU_015284_3_0_1"/>
<dbReference type="InParanoid" id="P54680"/>
<dbReference type="OMA" id="WQLMRKN"/>
<dbReference type="PhylomeDB" id="P54680"/>
<dbReference type="PRO" id="PR:P54680"/>
<dbReference type="Proteomes" id="UP000002195">
    <property type="component" value="Chromosome 3"/>
</dbReference>
<dbReference type="GO" id="GO:0005884">
    <property type="term" value="C:actin filament"/>
    <property type="evidence" value="ECO:0000318"/>
    <property type="project" value="GO_Central"/>
</dbReference>
<dbReference type="GO" id="GO:0032432">
    <property type="term" value="C:actin filament bundle"/>
    <property type="evidence" value="ECO:0000318"/>
    <property type="project" value="GO_Central"/>
</dbReference>
<dbReference type="GO" id="GO:0031252">
    <property type="term" value="C:cell leading edge"/>
    <property type="evidence" value="ECO:0000314"/>
    <property type="project" value="dictyBase"/>
</dbReference>
<dbReference type="GO" id="GO:0005737">
    <property type="term" value="C:cytoplasm"/>
    <property type="evidence" value="ECO:0000318"/>
    <property type="project" value="GO_Central"/>
</dbReference>
<dbReference type="GO" id="GO:0030027">
    <property type="term" value="C:lamellipodium"/>
    <property type="evidence" value="ECO:0000314"/>
    <property type="project" value="dictyBase"/>
</dbReference>
<dbReference type="GO" id="GO:0001891">
    <property type="term" value="C:phagocytic cup"/>
    <property type="evidence" value="ECO:0000314"/>
    <property type="project" value="dictyBase"/>
</dbReference>
<dbReference type="GO" id="GO:0045335">
    <property type="term" value="C:phagocytic vesicle"/>
    <property type="evidence" value="ECO:0000314"/>
    <property type="project" value="dictyBase"/>
</dbReference>
<dbReference type="GO" id="GO:0051015">
    <property type="term" value="F:actin filament binding"/>
    <property type="evidence" value="ECO:0000314"/>
    <property type="project" value="dictyBase"/>
</dbReference>
<dbReference type="GO" id="GO:0005509">
    <property type="term" value="F:calcium ion binding"/>
    <property type="evidence" value="ECO:0000250"/>
    <property type="project" value="dictyBase"/>
</dbReference>
<dbReference type="GO" id="GO:0051017">
    <property type="term" value="P:actin filament bundle assembly"/>
    <property type="evidence" value="ECO:0000314"/>
    <property type="project" value="dictyBase"/>
</dbReference>
<dbReference type="GO" id="GO:0051639">
    <property type="term" value="P:actin filament network formation"/>
    <property type="evidence" value="ECO:0000318"/>
    <property type="project" value="GO_Central"/>
</dbReference>
<dbReference type="GO" id="GO:0019953">
    <property type="term" value="P:sexual reproduction"/>
    <property type="evidence" value="ECO:0000270"/>
    <property type="project" value="dictyBase"/>
</dbReference>
<dbReference type="CDD" id="cd21295">
    <property type="entry name" value="CH_PLS_rpt2"/>
    <property type="match status" value="1"/>
</dbReference>
<dbReference type="CDD" id="cd21298">
    <property type="entry name" value="CH_PLS_rpt3"/>
    <property type="match status" value="1"/>
</dbReference>
<dbReference type="CDD" id="cd21301">
    <property type="entry name" value="CH_PLS_rpt4"/>
    <property type="match status" value="1"/>
</dbReference>
<dbReference type="CDD" id="cd00051">
    <property type="entry name" value="EFh"/>
    <property type="match status" value="1"/>
</dbReference>
<dbReference type="FunFam" id="1.10.418.10:FF:000042">
    <property type="entry name" value="Fimbrin, putative"/>
    <property type="match status" value="1"/>
</dbReference>
<dbReference type="FunFam" id="1.10.238.10:FF:000263">
    <property type="entry name" value="plastin-1 isoform X2"/>
    <property type="match status" value="1"/>
</dbReference>
<dbReference type="FunFam" id="1.10.418.10:FF:000010">
    <property type="entry name" value="Plastin-3 isoform 1"/>
    <property type="match status" value="1"/>
</dbReference>
<dbReference type="FunFam" id="1.10.418.10:FF:000016">
    <property type="entry name" value="Probable fimbrin"/>
    <property type="match status" value="1"/>
</dbReference>
<dbReference type="FunFam" id="1.10.418.10:FF:000027">
    <property type="entry name" value="Probable fimbrin"/>
    <property type="match status" value="1"/>
</dbReference>
<dbReference type="Gene3D" id="1.10.418.10">
    <property type="entry name" value="Calponin-like domain"/>
    <property type="match status" value="4"/>
</dbReference>
<dbReference type="Gene3D" id="1.10.238.10">
    <property type="entry name" value="EF-hand"/>
    <property type="match status" value="1"/>
</dbReference>
<dbReference type="InterPro" id="IPR001589">
    <property type="entry name" value="Actinin_actin-bd_CS"/>
</dbReference>
<dbReference type="InterPro" id="IPR001715">
    <property type="entry name" value="CH_dom"/>
</dbReference>
<dbReference type="InterPro" id="IPR036872">
    <property type="entry name" value="CH_dom_sf"/>
</dbReference>
<dbReference type="InterPro" id="IPR011992">
    <property type="entry name" value="EF-hand-dom_pair"/>
</dbReference>
<dbReference type="InterPro" id="IPR018247">
    <property type="entry name" value="EF_Hand_1_Ca_BS"/>
</dbReference>
<dbReference type="InterPro" id="IPR002048">
    <property type="entry name" value="EF_hand_dom"/>
</dbReference>
<dbReference type="InterPro" id="IPR039959">
    <property type="entry name" value="Fimbrin/Plastin"/>
</dbReference>
<dbReference type="PANTHER" id="PTHR19961:SF18">
    <property type="entry name" value="FI19014P1"/>
    <property type="match status" value="1"/>
</dbReference>
<dbReference type="PANTHER" id="PTHR19961">
    <property type="entry name" value="FIMBRIN/PLASTIN"/>
    <property type="match status" value="1"/>
</dbReference>
<dbReference type="Pfam" id="PF00307">
    <property type="entry name" value="CH"/>
    <property type="match status" value="4"/>
</dbReference>
<dbReference type="Pfam" id="PF13499">
    <property type="entry name" value="EF-hand_7"/>
    <property type="match status" value="1"/>
</dbReference>
<dbReference type="SMART" id="SM00033">
    <property type="entry name" value="CH"/>
    <property type="match status" value="4"/>
</dbReference>
<dbReference type="SMART" id="SM00054">
    <property type="entry name" value="EFh"/>
    <property type="match status" value="2"/>
</dbReference>
<dbReference type="SUPFAM" id="SSF47576">
    <property type="entry name" value="Calponin-homology domain, CH-domain"/>
    <property type="match status" value="1"/>
</dbReference>
<dbReference type="SUPFAM" id="SSF47473">
    <property type="entry name" value="EF-hand"/>
    <property type="match status" value="1"/>
</dbReference>
<dbReference type="PROSITE" id="PS00019">
    <property type="entry name" value="ACTININ_1"/>
    <property type="match status" value="2"/>
</dbReference>
<dbReference type="PROSITE" id="PS00020">
    <property type="entry name" value="ACTININ_2"/>
    <property type="match status" value="2"/>
</dbReference>
<dbReference type="PROSITE" id="PS50021">
    <property type="entry name" value="CH"/>
    <property type="match status" value="4"/>
</dbReference>
<dbReference type="PROSITE" id="PS00018">
    <property type="entry name" value="EF_HAND_1"/>
    <property type="match status" value="2"/>
</dbReference>
<dbReference type="PROSITE" id="PS50222">
    <property type="entry name" value="EF_HAND_2"/>
    <property type="match status" value="2"/>
</dbReference>
<evidence type="ECO:0000255" key="1">
    <source>
        <dbReference type="PROSITE-ProRule" id="PRU00044"/>
    </source>
</evidence>
<evidence type="ECO:0000255" key="2">
    <source>
        <dbReference type="PROSITE-ProRule" id="PRU00448"/>
    </source>
</evidence>
<evidence type="ECO:0000305" key="3"/>
<accession>P54680</accession>
<accession>Q54YW7</accession>
<proteinExistence type="evidence at transcript level"/>
<protein>
    <recommendedName>
        <fullName>Fimbrin</fullName>
    </recommendedName>
</protein>
<reference key="1">
    <citation type="submission" date="1995-09" db="EMBL/GenBank/DDBJ databases">
        <authorList>
            <person name="Prassler J."/>
        </authorList>
    </citation>
    <scope>NUCLEOTIDE SEQUENCE [MRNA]</scope>
    <source>
        <strain>AX3</strain>
    </source>
</reference>
<reference key="2">
    <citation type="journal article" date="2005" name="Nature">
        <title>The genome of the social amoeba Dictyostelium discoideum.</title>
        <authorList>
            <person name="Eichinger L."/>
            <person name="Pachebat J.A."/>
            <person name="Gloeckner G."/>
            <person name="Rajandream M.A."/>
            <person name="Sucgang R."/>
            <person name="Berriman M."/>
            <person name="Song J."/>
            <person name="Olsen R."/>
            <person name="Szafranski K."/>
            <person name="Xu Q."/>
            <person name="Tunggal B."/>
            <person name="Kummerfeld S."/>
            <person name="Madera M."/>
            <person name="Konfortov B.A."/>
            <person name="Rivero F."/>
            <person name="Bankier A.T."/>
            <person name="Lehmann R."/>
            <person name="Hamlin N."/>
            <person name="Davies R."/>
            <person name="Gaudet P."/>
            <person name="Fey P."/>
            <person name="Pilcher K."/>
            <person name="Chen G."/>
            <person name="Saunders D."/>
            <person name="Sodergren E.J."/>
            <person name="Davis P."/>
            <person name="Kerhornou A."/>
            <person name="Nie X."/>
            <person name="Hall N."/>
            <person name="Anjard C."/>
            <person name="Hemphill L."/>
            <person name="Bason N."/>
            <person name="Farbrother P."/>
            <person name="Desany B."/>
            <person name="Just E."/>
            <person name="Morio T."/>
            <person name="Rost R."/>
            <person name="Churcher C.M."/>
            <person name="Cooper J."/>
            <person name="Haydock S."/>
            <person name="van Driessche N."/>
            <person name="Cronin A."/>
            <person name="Goodhead I."/>
            <person name="Muzny D.M."/>
            <person name="Mourier T."/>
            <person name="Pain A."/>
            <person name="Lu M."/>
            <person name="Harper D."/>
            <person name="Lindsay R."/>
            <person name="Hauser H."/>
            <person name="James K.D."/>
            <person name="Quiles M."/>
            <person name="Madan Babu M."/>
            <person name="Saito T."/>
            <person name="Buchrieser C."/>
            <person name="Wardroper A."/>
            <person name="Felder M."/>
            <person name="Thangavelu M."/>
            <person name="Johnson D."/>
            <person name="Knights A."/>
            <person name="Loulseged H."/>
            <person name="Mungall K.L."/>
            <person name="Oliver K."/>
            <person name="Price C."/>
            <person name="Quail M.A."/>
            <person name="Urushihara H."/>
            <person name="Hernandez J."/>
            <person name="Rabbinowitsch E."/>
            <person name="Steffen D."/>
            <person name="Sanders M."/>
            <person name="Ma J."/>
            <person name="Kohara Y."/>
            <person name="Sharp S."/>
            <person name="Simmonds M.N."/>
            <person name="Spiegler S."/>
            <person name="Tivey A."/>
            <person name="Sugano S."/>
            <person name="White B."/>
            <person name="Walker D."/>
            <person name="Woodward J.R."/>
            <person name="Winckler T."/>
            <person name="Tanaka Y."/>
            <person name="Shaulsky G."/>
            <person name="Schleicher M."/>
            <person name="Weinstock G.M."/>
            <person name="Rosenthal A."/>
            <person name="Cox E.C."/>
            <person name="Chisholm R.L."/>
            <person name="Gibbs R.A."/>
            <person name="Loomis W.F."/>
            <person name="Platzer M."/>
            <person name="Kay R.R."/>
            <person name="Williams J.G."/>
            <person name="Dear P.H."/>
            <person name="Noegel A.A."/>
            <person name="Barrell B.G."/>
            <person name="Kuspa A."/>
        </authorList>
    </citation>
    <scope>NUCLEOTIDE SEQUENCE [LARGE SCALE GENOMIC DNA]</scope>
    <source>
        <strain>AX4</strain>
    </source>
</reference>
<gene>
    <name type="primary">fimA</name>
    <name type="ORF">DDB_G0277855</name>
</gene>
<feature type="chain" id="PRO_0000073752" description="Fimbrin">
    <location>
        <begin position="1"/>
        <end position="610"/>
    </location>
</feature>
<feature type="domain" description="EF-hand 1" evidence="2">
    <location>
        <begin position="7"/>
        <end position="42"/>
    </location>
</feature>
<feature type="domain" description="EF-hand 2" evidence="2">
    <location>
        <begin position="43"/>
        <end position="78"/>
    </location>
</feature>
<feature type="domain" description="Calponin-homology (CH) 1" evidence="1">
    <location>
        <begin position="116"/>
        <end position="232"/>
    </location>
</feature>
<feature type="domain" description="Calponin-homology (CH) 2" evidence="1">
    <location>
        <begin position="260"/>
        <end position="365"/>
    </location>
</feature>
<feature type="domain" description="Calponin-homology (CH) 3" evidence="1">
    <location>
        <begin position="379"/>
        <end position="488"/>
    </location>
</feature>
<feature type="domain" description="Calponin-homology (CH) 4" evidence="1">
    <location>
        <begin position="501"/>
        <end position="608"/>
    </location>
</feature>
<feature type="region of interest" description="Actin-binding 1">
    <location>
        <begin position="102"/>
        <end position="365"/>
    </location>
</feature>
<feature type="region of interest" description="Actin-binding 2">
    <location>
        <begin position="366"/>
        <end position="608"/>
    </location>
</feature>
<feature type="binding site" evidence="2">
    <location>
        <position position="20"/>
    </location>
    <ligand>
        <name>Ca(2+)</name>
        <dbReference type="ChEBI" id="CHEBI:29108"/>
        <label>1</label>
    </ligand>
</feature>
<feature type="binding site" evidence="2">
    <location>
        <position position="22"/>
    </location>
    <ligand>
        <name>Ca(2+)</name>
        <dbReference type="ChEBI" id="CHEBI:29108"/>
        <label>1</label>
    </ligand>
</feature>
<feature type="binding site" evidence="2">
    <location>
        <position position="24"/>
    </location>
    <ligand>
        <name>Ca(2+)</name>
        <dbReference type="ChEBI" id="CHEBI:29108"/>
        <label>1</label>
    </ligand>
</feature>
<feature type="binding site" evidence="2">
    <location>
        <position position="26"/>
    </location>
    <ligand>
        <name>Ca(2+)</name>
        <dbReference type="ChEBI" id="CHEBI:29108"/>
        <label>1</label>
    </ligand>
</feature>
<feature type="binding site" evidence="2">
    <location>
        <position position="31"/>
    </location>
    <ligand>
        <name>Ca(2+)</name>
        <dbReference type="ChEBI" id="CHEBI:29108"/>
        <label>1</label>
    </ligand>
</feature>
<feature type="binding site" evidence="2">
    <location>
        <position position="56"/>
    </location>
    <ligand>
        <name>Ca(2+)</name>
        <dbReference type="ChEBI" id="CHEBI:29108"/>
        <label>2</label>
    </ligand>
</feature>
<feature type="binding site" evidence="2">
    <location>
        <position position="58"/>
    </location>
    <ligand>
        <name>Ca(2+)</name>
        <dbReference type="ChEBI" id="CHEBI:29108"/>
        <label>2</label>
    </ligand>
</feature>
<feature type="binding site" evidence="2">
    <location>
        <position position="60"/>
    </location>
    <ligand>
        <name>Ca(2+)</name>
        <dbReference type="ChEBI" id="CHEBI:29108"/>
        <label>2</label>
    </ligand>
</feature>
<feature type="binding site" evidence="2">
    <location>
        <position position="62"/>
    </location>
    <ligand>
        <name>Ca(2+)</name>
        <dbReference type="ChEBI" id="CHEBI:29108"/>
        <label>2</label>
    </ligand>
</feature>
<feature type="binding site" evidence="2">
    <location>
        <position position="67"/>
    </location>
    <ligand>
        <name>Ca(2+)</name>
        <dbReference type="ChEBI" id="CHEBI:29108"/>
        <label>2</label>
    </ligand>
</feature>
<feature type="sequence conflict" description="In Ref. 1; AAA75489." evidence="3" ref="1">
    <original>WT</original>
    <variation>VA</variation>
    <location>
        <begin position="510"/>
        <end position="511"/>
    </location>
</feature>
<keyword id="KW-0009">Actin-binding</keyword>
<keyword id="KW-0106">Calcium</keyword>
<keyword id="KW-0479">Metal-binding</keyword>
<keyword id="KW-1185">Reference proteome</keyword>
<keyword id="KW-0677">Repeat</keyword>
<comment type="function">
    <text>Binds to actin.</text>
</comment>
<name>FIMB_DICDI</name>
<organism>
    <name type="scientific">Dictyostelium discoideum</name>
    <name type="common">Social amoeba</name>
    <dbReference type="NCBI Taxonomy" id="44689"/>
    <lineage>
        <taxon>Eukaryota</taxon>
        <taxon>Amoebozoa</taxon>
        <taxon>Evosea</taxon>
        <taxon>Eumycetozoa</taxon>
        <taxon>Dictyostelia</taxon>
        <taxon>Dictyosteliales</taxon>
        <taxon>Dictyosteliaceae</taxon>
        <taxon>Dictyostelium</taxon>
    </lineage>
</organism>